<dbReference type="EMBL" id="CP000381">
    <property type="protein sequence ID" value="ABX74011.1"/>
    <property type="molecule type" value="Genomic_DNA"/>
</dbReference>
<dbReference type="RefSeq" id="WP_002218660.1">
    <property type="nucleotide sequence ID" value="NC_010120.1"/>
</dbReference>
<dbReference type="SMR" id="A9M3B7"/>
<dbReference type="KEGG" id="nmn:NMCC_1880"/>
<dbReference type="HOGENOM" id="CLU_087936_0_0_4"/>
<dbReference type="Proteomes" id="UP000001177">
    <property type="component" value="Chromosome"/>
</dbReference>
<dbReference type="GO" id="GO:0005737">
    <property type="term" value="C:cytoplasm"/>
    <property type="evidence" value="ECO:0007669"/>
    <property type="project" value="UniProtKB-SubCell"/>
</dbReference>
<dbReference type="GO" id="GO:0009379">
    <property type="term" value="C:Holliday junction helicase complex"/>
    <property type="evidence" value="ECO:0007669"/>
    <property type="project" value="InterPro"/>
</dbReference>
<dbReference type="GO" id="GO:0048476">
    <property type="term" value="C:Holliday junction resolvase complex"/>
    <property type="evidence" value="ECO:0007669"/>
    <property type="project" value="UniProtKB-UniRule"/>
</dbReference>
<dbReference type="GO" id="GO:0005524">
    <property type="term" value="F:ATP binding"/>
    <property type="evidence" value="ECO:0007669"/>
    <property type="project" value="InterPro"/>
</dbReference>
<dbReference type="GO" id="GO:0000400">
    <property type="term" value="F:four-way junction DNA binding"/>
    <property type="evidence" value="ECO:0007669"/>
    <property type="project" value="UniProtKB-UniRule"/>
</dbReference>
<dbReference type="GO" id="GO:0009378">
    <property type="term" value="F:four-way junction helicase activity"/>
    <property type="evidence" value="ECO:0007669"/>
    <property type="project" value="InterPro"/>
</dbReference>
<dbReference type="GO" id="GO:0006310">
    <property type="term" value="P:DNA recombination"/>
    <property type="evidence" value="ECO:0007669"/>
    <property type="project" value="UniProtKB-UniRule"/>
</dbReference>
<dbReference type="GO" id="GO:0006281">
    <property type="term" value="P:DNA repair"/>
    <property type="evidence" value="ECO:0007669"/>
    <property type="project" value="UniProtKB-UniRule"/>
</dbReference>
<dbReference type="CDD" id="cd14332">
    <property type="entry name" value="UBA_RuvA_C"/>
    <property type="match status" value="1"/>
</dbReference>
<dbReference type="Gene3D" id="1.10.150.20">
    <property type="entry name" value="5' to 3' exonuclease, C-terminal subdomain"/>
    <property type="match status" value="1"/>
</dbReference>
<dbReference type="Gene3D" id="1.10.8.10">
    <property type="entry name" value="DNA helicase RuvA subunit, C-terminal domain"/>
    <property type="match status" value="1"/>
</dbReference>
<dbReference type="Gene3D" id="2.40.50.140">
    <property type="entry name" value="Nucleic acid-binding proteins"/>
    <property type="match status" value="1"/>
</dbReference>
<dbReference type="HAMAP" id="MF_00031">
    <property type="entry name" value="DNA_HJ_migration_RuvA"/>
    <property type="match status" value="1"/>
</dbReference>
<dbReference type="InterPro" id="IPR013849">
    <property type="entry name" value="DNA_helicase_Holl-junc_RuvA_I"/>
</dbReference>
<dbReference type="InterPro" id="IPR003583">
    <property type="entry name" value="Hlx-hairpin-Hlx_DNA-bd_motif"/>
</dbReference>
<dbReference type="InterPro" id="IPR012340">
    <property type="entry name" value="NA-bd_OB-fold"/>
</dbReference>
<dbReference type="InterPro" id="IPR000085">
    <property type="entry name" value="RuvA"/>
</dbReference>
<dbReference type="InterPro" id="IPR010994">
    <property type="entry name" value="RuvA_2-like"/>
</dbReference>
<dbReference type="InterPro" id="IPR011114">
    <property type="entry name" value="RuvA_C"/>
</dbReference>
<dbReference type="InterPro" id="IPR036267">
    <property type="entry name" value="RuvA_C_sf"/>
</dbReference>
<dbReference type="NCBIfam" id="TIGR00084">
    <property type="entry name" value="ruvA"/>
    <property type="match status" value="1"/>
</dbReference>
<dbReference type="Pfam" id="PF14520">
    <property type="entry name" value="HHH_5"/>
    <property type="match status" value="1"/>
</dbReference>
<dbReference type="Pfam" id="PF07499">
    <property type="entry name" value="RuvA_C"/>
    <property type="match status" value="1"/>
</dbReference>
<dbReference type="Pfam" id="PF01330">
    <property type="entry name" value="RuvA_N"/>
    <property type="match status" value="1"/>
</dbReference>
<dbReference type="SMART" id="SM00278">
    <property type="entry name" value="HhH1"/>
    <property type="match status" value="2"/>
</dbReference>
<dbReference type="SUPFAM" id="SSF46929">
    <property type="entry name" value="DNA helicase RuvA subunit, C-terminal domain"/>
    <property type="match status" value="1"/>
</dbReference>
<dbReference type="SUPFAM" id="SSF50249">
    <property type="entry name" value="Nucleic acid-binding proteins"/>
    <property type="match status" value="1"/>
</dbReference>
<dbReference type="SUPFAM" id="SSF47781">
    <property type="entry name" value="RuvA domain 2-like"/>
    <property type="match status" value="1"/>
</dbReference>
<sequence>MISRLTGKLVEKNPPQIVIDVNGVGYEADVSMQTFYNLPPVGESVQLFTQLIIREDAHLLFGFATAEERKTFRQLIKVGGIGAKTALGILSAMTADELAQAVAEEDVKRLSSAPGIGKKTAERMVLELRGKLVAHTVTDGLFAAAPAADETEDIVSTLLALGYSEREAKAAVKGVPEGTDVGEGVRLALKNLLK</sequence>
<organism>
    <name type="scientific">Neisseria meningitidis serogroup C (strain 053442)</name>
    <dbReference type="NCBI Taxonomy" id="374833"/>
    <lineage>
        <taxon>Bacteria</taxon>
        <taxon>Pseudomonadati</taxon>
        <taxon>Pseudomonadota</taxon>
        <taxon>Betaproteobacteria</taxon>
        <taxon>Neisseriales</taxon>
        <taxon>Neisseriaceae</taxon>
        <taxon>Neisseria</taxon>
    </lineage>
</organism>
<keyword id="KW-0963">Cytoplasm</keyword>
<keyword id="KW-0227">DNA damage</keyword>
<keyword id="KW-0233">DNA recombination</keyword>
<keyword id="KW-0234">DNA repair</keyword>
<keyword id="KW-0238">DNA-binding</keyword>
<gene>
    <name evidence="1" type="primary">ruvA</name>
    <name type="ordered locus">NMCC_1880</name>
</gene>
<comment type="function">
    <text evidence="1">The RuvA-RuvB-RuvC complex processes Holliday junction (HJ) DNA during genetic recombination and DNA repair, while the RuvA-RuvB complex plays an important role in the rescue of blocked DNA replication forks via replication fork reversal (RFR). RuvA specifically binds to HJ cruciform DNA, conferring on it an open structure. The RuvB hexamer acts as an ATP-dependent pump, pulling dsDNA into and through the RuvAB complex. HJ branch migration allows RuvC to scan DNA until it finds its consensus sequence, where it cleaves and resolves the cruciform DNA.</text>
</comment>
<comment type="subunit">
    <text evidence="1">Homotetramer. Forms an RuvA(8)-RuvB(12)-Holliday junction (HJ) complex. HJ DNA is sandwiched between 2 RuvA tetramers; dsDNA enters through RuvA and exits via RuvB. An RuvB hexamer assembles on each DNA strand where it exits the tetramer. Each RuvB hexamer is contacted by two RuvA subunits (via domain III) on 2 adjacent RuvB subunits; this complex drives branch migration. In the full resolvosome a probable DNA-RuvA(4)-RuvB(12)-RuvC(2) complex forms which resolves the HJ.</text>
</comment>
<comment type="subcellular location">
    <subcellularLocation>
        <location evidence="1">Cytoplasm</location>
    </subcellularLocation>
</comment>
<comment type="domain">
    <text evidence="1">Has three domains with a flexible linker between the domains II and III and assumes an 'L' shape. Domain III is highly mobile and contacts RuvB.</text>
</comment>
<comment type="similarity">
    <text evidence="1">Belongs to the RuvA family.</text>
</comment>
<accession>A9M3B7</accession>
<protein>
    <recommendedName>
        <fullName evidence="1">Holliday junction branch migration complex subunit RuvA</fullName>
    </recommendedName>
</protein>
<proteinExistence type="inferred from homology"/>
<feature type="chain" id="PRO_1000074427" description="Holliday junction branch migration complex subunit RuvA">
    <location>
        <begin position="1"/>
        <end position="194"/>
    </location>
</feature>
<feature type="region of interest" description="Domain I" evidence="1">
    <location>
        <begin position="1"/>
        <end position="64"/>
    </location>
</feature>
<feature type="region of interest" description="Domain II" evidence="1">
    <location>
        <begin position="65"/>
        <end position="143"/>
    </location>
</feature>
<feature type="region of interest" description="Flexible linker" evidence="1">
    <location>
        <begin position="144"/>
        <end position="147"/>
    </location>
</feature>
<feature type="region of interest" description="Domain III" evidence="1">
    <location>
        <begin position="147"/>
        <end position="194"/>
    </location>
</feature>
<evidence type="ECO:0000255" key="1">
    <source>
        <dbReference type="HAMAP-Rule" id="MF_00031"/>
    </source>
</evidence>
<name>RUVA_NEIM0</name>
<reference key="1">
    <citation type="journal article" date="2008" name="Genomics">
        <title>Characterization of ST-4821 complex, a unique Neisseria meningitidis clone.</title>
        <authorList>
            <person name="Peng J."/>
            <person name="Yang L."/>
            <person name="Yang F."/>
            <person name="Yang J."/>
            <person name="Yan Y."/>
            <person name="Nie H."/>
            <person name="Zhang X."/>
            <person name="Xiong Z."/>
            <person name="Jiang Y."/>
            <person name="Cheng F."/>
            <person name="Xu X."/>
            <person name="Chen S."/>
            <person name="Sun L."/>
            <person name="Li W."/>
            <person name="Shen Y."/>
            <person name="Shao Z."/>
            <person name="Liang X."/>
            <person name="Xu J."/>
            <person name="Jin Q."/>
        </authorList>
    </citation>
    <scope>NUCLEOTIDE SEQUENCE [LARGE SCALE GENOMIC DNA]</scope>
    <source>
        <strain>053442</strain>
    </source>
</reference>